<protein>
    <recommendedName>
        <fullName evidence="21">Interleukin-6 receptor subunit beta</fullName>
        <shortName>IL-6 receptor subunit beta</shortName>
        <shortName>IL-6R subunit beta</shortName>
        <shortName>IL-6R-beta</shortName>
        <shortName>IL-6RB</shortName>
    </recommendedName>
    <alternativeName>
        <fullName>Interleukin-6 signal transducer</fullName>
    </alternativeName>
    <alternativeName>
        <fullName>Membrane glycoprotein 130</fullName>
        <shortName evidence="20">gp130</shortName>
    </alternativeName>
    <alternativeName>
        <fullName>Oncostatin-M receptor subunit alpha</fullName>
    </alternativeName>
    <cdAntigenName>CD130</cdAntigenName>
</protein>
<organism>
    <name type="scientific">Mus musculus</name>
    <name type="common">Mouse</name>
    <dbReference type="NCBI Taxonomy" id="10090"/>
    <lineage>
        <taxon>Eukaryota</taxon>
        <taxon>Metazoa</taxon>
        <taxon>Chordata</taxon>
        <taxon>Craniata</taxon>
        <taxon>Vertebrata</taxon>
        <taxon>Euteleostomi</taxon>
        <taxon>Mammalia</taxon>
        <taxon>Eutheria</taxon>
        <taxon>Euarchontoglires</taxon>
        <taxon>Glires</taxon>
        <taxon>Rodentia</taxon>
        <taxon>Myomorpha</taxon>
        <taxon>Muroidea</taxon>
        <taxon>Muridae</taxon>
        <taxon>Murinae</taxon>
        <taxon>Mus</taxon>
        <taxon>Mus</taxon>
    </lineage>
</organism>
<proteinExistence type="evidence at protein level"/>
<gene>
    <name evidence="22" type="primary">Il6st</name>
</gene>
<reference key="1">
    <citation type="journal article" date="1992" name="J. Immunol.">
        <title>Molecular cloning of a murine IL-6 receptor-associated signal transducer, gp130, and its regulated expression in vivo.</title>
        <authorList>
            <person name="Saito M."/>
            <person name="Yoshida K."/>
            <person name="Hibi M."/>
            <person name="Taga T."/>
            <person name="Kishimoto T."/>
        </authorList>
    </citation>
    <scope>NUCLEOTIDE SEQUENCE [MRNA]</scope>
    <scope>FUNCTION</scope>
    <scope>TISSUE SPECIFICITY</scope>
    <scope>DEVELOPMENTAL STAGE</scope>
    <source>
        <strain>ICR</strain>
        <tissue>Macrophage</tissue>
    </source>
</reference>
<reference key="2">
    <citation type="journal article" date="2009" name="PLoS Biol.">
        <title>Lineage-specific biology revealed by a finished genome assembly of the mouse.</title>
        <authorList>
            <person name="Church D.M."/>
            <person name="Goodstadt L."/>
            <person name="Hillier L.W."/>
            <person name="Zody M.C."/>
            <person name="Goldstein S."/>
            <person name="She X."/>
            <person name="Bult C.J."/>
            <person name="Agarwala R."/>
            <person name="Cherry J.L."/>
            <person name="DiCuccio M."/>
            <person name="Hlavina W."/>
            <person name="Kapustin Y."/>
            <person name="Meric P."/>
            <person name="Maglott D."/>
            <person name="Birtle Z."/>
            <person name="Marques A.C."/>
            <person name="Graves T."/>
            <person name="Zhou S."/>
            <person name="Teague B."/>
            <person name="Potamousis K."/>
            <person name="Churas C."/>
            <person name="Place M."/>
            <person name="Herschleb J."/>
            <person name="Runnheim R."/>
            <person name="Forrest D."/>
            <person name="Amos-Landgraf J."/>
            <person name="Schwartz D.C."/>
            <person name="Cheng Z."/>
            <person name="Lindblad-Toh K."/>
            <person name="Eichler E.E."/>
            <person name="Ponting C.P."/>
        </authorList>
    </citation>
    <scope>NUCLEOTIDE SEQUENCE [LARGE SCALE GENOMIC DNA]</scope>
    <source>
        <strain>C57BL/6J</strain>
    </source>
</reference>
<reference key="3">
    <citation type="submission" date="2005-07" db="EMBL/GenBank/DDBJ databases">
        <authorList>
            <person name="Mural R.J."/>
            <person name="Adams M.D."/>
            <person name="Myers E.W."/>
            <person name="Smith H.O."/>
            <person name="Venter J.C."/>
        </authorList>
    </citation>
    <scope>NUCLEOTIDE SEQUENCE [LARGE SCALE GENOMIC DNA]</scope>
</reference>
<reference key="4">
    <citation type="journal article" date="1996" name="Proc. Natl. Acad. Sci. U.S.A.">
        <title>Targeted disruption of gp130, a common signal transducer for the interleukin 6 family of cytokines, leads to myocardial and hematological disorders.</title>
        <authorList>
            <person name="Yoshida K."/>
            <person name="Taga T."/>
            <person name="Saito M."/>
            <person name="Suematsu S."/>
            <person name="Kumanogoh A."/>
            <person name="Tanaka T."/>
            <person name="Fujiwara H."/>
            <person name="Hirata M."/>
            <person name="Yamagami T."/>
            <person name="Nakahata T."/>
            <person name="Hirabayashi T."/>
            <person name="Yoneda Y."/>
            <person name="Tanaka K."/>
            <person name="Wang W.Z."/>
            <person name="Mori C."/>
            <person name="Shiota K."/>
            <person name="Yoshida N."/>
            <person name="Kishimoto T."/>
        </authorList>
    </citation>
    <scope>FUNCTION</scope>
    <scope>DISRUPTION PHENOTYPE</scope>
</reference>
<reference key="5">
    <citation type="journal article" date="1997" name="Endocrinology">
        <title>Osteoclasts are present in gp130-deficient mice.</title>
        <authorList>
            <person name="Kawasaki K."/>
            <person name="Gao Y.H."/>
            <person name="Yokose S."/>
            <person name="Kaji Y."/>
            <person name="Nakamura T."/>
            <person name="Suda T."/>
            <person name="Yoshida K."/>
            <person name="Taga T."/>
            <person name="Kishimoto T."/>
            <person name="Kataoka H."/>
            <person name="Yuasa T."/>
            <person name="Norimatsu H."/>
            <person name="Yamaguchi A."/>
        </authorList>
    </citation>
    <scope>FUNCTION</scope>
    <scope>DISRUPTION PHENOTYPE</scope>
</reference>
<reference key="6">
    <citation type="journal article" date="1997" name="Nature">
        <title>A family of cytokine-inducible inhibitors of signaling.</title>
        <authorList>
            <person name="Starr R."/>
            <person name="Willson T.A."/>
            <person name="Viney E.M."/>
            <person name="Murray L.J.L."/>
            <person name="Rayner J.R."/>
            <person name="Jenkins B.J."/>
            <person name="Gonda T.J."/>
            <person name="Alexander W.S."/>
            <person name="Metcalf D."/>
            <person name="Nicola N.A."/>
            <person name="Hilton D.J."/>
        </authorList>
    </citation>
    <scope>FUNCTION</scope>
    <source>
        <tissue>Thymus</tissue>
    </source>
</reference>
<reference key="7">
    <citation type="journal article" date="1999" name="Blood">
        <title>Reconstitution of the functional mouse oncostatin M (OSM) receptor: molecular cloning of the OSM receptor beta subunit.</title>
        <authorList>
            <person name="Tanaka M."/>
            <person name="Hara T."/>
            <person name="Copeland N.G."/>
            <person name="Gilbert D.J."/>
            <person name="Jenkins N.A."/>
            <person name="Miyajima A."/>
        </authorList>
    </citation>
    <scope>SUBUNIT</scope>
</reference>
<reference key="8">
    <citation type="journal article" date="1999" name="J. Neurosci.">
        <title>Developmental requirement of gp130 signaling in neuronal survival and astrocyte differentiation.</title>
        <authorList>
            <person name="Nakashima K."/>
            <person name="Wiese S."/>
            <person name="Yanagisawa M."/>
            <person name="Arakawa H."/>
            <person name="Kimura N."/>
            <person name="Hisatsune T."/>
            <person name="Yoshida K."/>
            <person name="Kishimoto T."/>
            <person name="Sendtner M."/>
            <person name="Taga T."/>
        </authorList>
    </citation>
    <scope>FUNCTION</scope>
    <scope>DISRUPTION PHENOTYPE</scope>
</reference>
<reference key="9">
    <citation type="journal article" date="2000" name="Immunity">
        <title>Dissection of signaling cascades through gp130 in vivo: reciprocal roles for STAT3- and SHP2-mediated signals in immune responses.</title>
        <authorList>
            <person name="Ohtani T."/>
            <person name="Ishihara K."/>
            <person name="Atsumi T."/>
            <person name="Nishida K."/>
            <person name="Kaneko Y."/>
            <person name="Miyata T."/>
            <person name="Itoh S."/>
            <person name="Narimatsu M."/>
            <person name="Maeda H."/>
            <person name="Fukada T."/>
            <person name="Itoh M."/>
            <person name="Okano H."/>
            <person name="Hibi M."/>
            <person name="Hirano T."/>
        </authorList>
    </citation>
    <scope>FUNCTION</scope>
</reference>
<reference key="10">
    <citation type="journal article" date="2006" name="Stem Cells Dev.">
        <title>s-SHIP associates with receptor complexes essential for pluripotent stem cell growth and survival.</title>
        <authorList>
            <person name="Desponts C."/>
            <person name="Ninos J.M."/>
            <person name="Kerr W.G."/>
        </authorList>
    </citation>
    <scope>INTERACTION WITH INPP5D</scope>
</reference>
<reference key="11">
    <citation type="journal article" date="2009" name="Immunity">
        <title>The phagosomal proteome in interferon-gamma-activated macrophages.</title>
        <authorList>
            <person name="Trost M."/>
            <person name="English L."/>
            <person name="Lemieux S."/>
            <person name="Courcelles M."/>
            <person name="Desjardins M."/>
            <person name="Thibault P."/>
        </authorList>
    </citation>
    <scope>IDENTIFICATION BY MASS SPECTROMETRY [LARGE SCALE ANALYSIS]</scope>
</reference>
<reference key="12">
    <citation type="journal article" date="2009" name="Nat. Biotechnol.">
        <title>Mass-spectrometric identification and relative quantification of N-linked cell surface glycoproteins.</title>
        <authorList>
            <person name="Wollscheid B."/>
            <person name="Bausch-Fluck D."/>
            <person name="Henderson C."/>
            <person name="O'Brien R."/>
            <person name="Bibel M."/>
            <person name="Schiess R."/>
            <person name="Aebersold R."/>
            <person name="Watts J.D."/>
        </authorList>
    </citation>
    <scope>GLYCOSYLATION [LARGE SCALE ANALYSIS] AT ASN-225</scope>
</reference>
<reference key="13">
    <citation type="journal article" date="2010" name="Cell">
        <title>A tissue-specific atlas of mouse protein phosphorylation and expression.</title>
        <authorList>
            <person name="Huttlin E.L."/>
            <person name="Jedrychowski M.P."/>
            <person name="Elias J.E."/>
            <person name="Goswami T."/>
            <person name="Rad R."/>
            <person name="Beausoleil S.A."/>
            <person name="Villen J."/>
            <person name="Haas W."/>
            <person name="Sowa M.E."/>
            <person name="Gygi S.P."/>
        </authorList>
    </citation>
    <scope>PHOSPHORYLATION [LARGE SCALE ANALYSIS] AT SER-787</scope>
    <scope>IDENTIFICATION BY MASS SPECTROMETRY [LARGE SCALE ANALYSIS]</scope>
    <source>
        <tissue>Brain</tissue>
        <tissue>Brown adipose tissue</tissue>
        <tissue>Heart</tissue>
        <tissue>Kidney</tissue>
        <tissue>Liver</tissue>
        <tissue>Lung</tissue>
        <tissue>Pancreas</tissue>
        <tissue>Spleen</tissue>
        <tissue>Testis</tissue>
    </source>
</reference>
<reference key="14">
    <citation type="journal article" date="2014" name="J. Bone Miner. Res.">
        <title>The primary function of gp130 signaling in osteoblasts is to maintain bone formation and strength, rather than promote osteoclast formation.</title>
        <authorList>
            <person name="Johnson R.W."/>
            <person name="Brennan H.J."/>
            <person name="Vrahnas C."/>
            <person name="Poulton I.J."/>
            <person name="McGregor N.E."/>
            <person name="Standal T."/>
            <person name="Walker E.C."/>
            <person name="Koh T.T."/>
            <person name="Nguyen H."/>
            <person name="Walsh N.C."/>
            <person name="Forwood M.R."/>
            <person name="Martin T.J."/>
            <person name="Sims N.A."/>
        </authorList>
    </citation>
    <scope>FUNCTION</scope>
    <scope>DISRUPTION PHENOTYPE</scope>
</reference>
<reference key="15">
    <citation type="journal article" date="2014" name="J. Endocrinol.">
        <title>gp130 in late osteoblasts and osteocytes is required for PTH-induced osteoblast differentiation.</title>
        <authorList>
            <person name="Standal T."/>
            <person name="Johnson R.W."/>
            <person name="McGregor N.E."/>
            <person name="Poulton I.J."/>
            <person name="Ho P.W."/>
            <person name="Martin T.J."/>
            <person name="Sims N.A."/>
        </authorList>
    </citation>
    <scope>FUNCTION</scope>
</reference>
<reference key="16">
    <citation type="journal article" date="2014" name="J. Neurosci.">
        <title>Deletion of interleukin-6 signal transducer gp130 in small sensory neurons attenuates mechanonociception and down-regulates TRPA1 expression.</title>
        <authorList>
            <person name="Malsch P."/>
            <person name="Andratsch M."/>
            <person name="Vogl C."/>
            <person name="Link A.S."/>
            <person name="Alzheimer C."/>
            <person name="Brierley S.M."/>
            <person name="Hughes P.A."/>
            <person name="Kress M."/>
        </authorList>
    </citation>
    <scope>FUNCTION</scope>
    <scope>DISRUPTION PHENOTYPE</scope>
</reference>
<reference key="17">
    <citation type="journal article" date="2015" name="Bone">
        <title>Glycoprotein130 (Gp130)/interleukin-6 (IL-6) signalling in osteoclasts promotes bone formation in periosteal and trabecular bone.</title>
        <authorList>
            <person name="Johnson R.W."/>
            <person name="McGregor N.E."/>
            <person name="Brennan H.J."/>
            <person name="Crimeen-Irwin B."/>
            <person name="Poulton I.J."/>
            <person name="Martin T.J."/>
            <person name="Sims N.A."/>
        </authorList>
    </citation>
    <scope>FUNCTION</scope>
    <scope>DISRUPTION PHENOTYPE</scope>
</reference>
<reference key="18">
    <citation type="journal article" date="2015" name="Nature">
        <title>A gp130-Src-YAP module links inflammation to epithelial regeneration.</title>
        <authorList>
            <person name="Taniguchi K."/>
            <person name="Wu L.W."/>
            <person name="Grivennikov S.I."/>
            <person name="de Jong P.R."/>
            <person name="Lian I."/>
            <person name="Yu F.X."/>
            <person name="Wang K."/>
            <person name="Ho S.B."/>
            <person name="Boland B.S."/>
            <person name="Chang J.T."/>
            <person name="Sandborn W.J."/>
            <person name="Hardiman G."/>
            <person name="Raz E."/>
            <person name="Maehara Y."/>
            <person name="Yoshimura A."/>
            <person name="Zucman-Rossi J."/>
            <person name="Guan K.L."/>
            <person name="Karin M."/>
        </authorList>
    </citation>
    <scope>FUNCTION</scope>
</reference>
<reference key="19">
    <citation type="journal article" date="2017" name="Cell Rep.">
        <title>IL-6 Improves Energy and Glucose Homeostasis in Obesity via Enhanced Central IL-6 trans-Signaling.</title>
        <authorList>
            <person name="Timper K."/>
            <person name="Denson J.L."/>
            <person name="Steculorum S.M."/>
            <person name="Heilinger C."/>
            <person name="Engstroem-Ruud L."/>
            <person name="Wunderlich C.M."/>
            <person name="Rose-John S."/>
            <person name="Wunderlich F.T."/>
            <person name="Bruening J.C."/>
        </authorList>
    </citation>
    <scope>FUNCTION</scope>
    <scope>TISSUE SPECIFICITY</scope>
    <scope>INDUCTION BY OBESITY</scope>
</reference>
<reference key="20">
    <citation type="journal article" date="2017" name="Nat. Immunol.">
        <title>Trans-presentation of IL-6 by dendritic cells is required for the priming of pathogenic TH17 cells.</title>
        <authorList>
            <person name="Heink S."/>
            <person name="Yogev N."/>
            <person name="Garbers C."/>
            <person name="Herwerth M."/>
            <person name="Aly L."/>
            <person name="Gasperi C."/>
            <person name="Husterer V."/>
            <person name="Croxford A.L."/>
            <person name="Moeller-Hackbarth K."/>
            <person name="Bartsch H.S."/>
            <person name="Sotlar K."/>
            <person name="Krebs S."/>
            <person name="Regen T."/>
            <person name="Blum H."/>
            <person name="Hemmer B."/>
            <person name="Misgeld T."/>
            <person name="Wunderlich T.F."/>
            <person name="Hidalgo J."/>
            <person name="Oukka M."/>
            <person name="Rose-John S."/>
            <person name="Schmidt-Supprian M."/>
            <person name="Waisman A."/>
            <person name="Korn T."/>
        </authorList>
    </citation>
    <scope>FUNCTION</scope>
    <scope>DISRUPTION PHENOTYPE</scope>
    <scope>TISSUE SPECIFICITY</scope>
</reference>
<name>IL6RB_MOUSE</name>
<accession>Q00560</accession>
<accession>G5E8D2</accession>
<dbReference type="EMBL" id="X62646">
    <property type="protein sequence ID" value="CAA44515.1"/>
    <property type="molecule type" value="mRNA"/>
</dbReference>
<dbReference type="EMBL" id="M83336">
    <property type="protein sequence ID" value="AAA37723.1"/>
    <property type="molecule type" value="mRNA"/>
</dbReference>
<dbReference type="EMBL" id="AC159196">
    <property type="status" value="NOT_ANNOTATED_CDS"/>
    <property type="molecule type" value="Genomic_DNA"/>
</dbReference>
<dbReference type="EMBL" id="CH466568">
    <property type="protein sequence ID" value="EDL18412.1"/>
    <property type="molecule type" value="Genomic_DNA"/>
</dbReference>
<dbReference type="CCDS" id="CCDS26773.1"/>
<dbReference type="PIR" id="I49699">
    <property type="entry name" value="I49699"/>
</dbReference>
<dbReference type="RefSeq" id="NP_034690.3">
    <property type="nucleotide sequence ID" value="NM_010560.3"/>
</dbReference>
<dbReference type="RefSeq" id="XP_036013751.1">
    <property type="nucleotide sequence ID" value="XM_036157858.1"/>
</dbReference>
<dbReference type="PDB" id="2BBU">
    <property type="method" value="NMR"/>
    <property type="chains" value="B=750-764"/>
</dbReference>
<dbReference type="PDB" id="2HMH">
    <property type="method" value="X-ray"/>
    <property type="resolution" value="2.00 A"/>
    <property type="chains" value="B=753-763"/>
</dbReference>
<dbReference type="PDB" id="4GL9">
    <property type="method" value="X-ray"/>
    <property type="resolution" value="3.90 A"/>
    <property type="chains" value="I/J/K/L=750-764"/>
</dbReference>
<dbReference type="PDB" id="6C5X">
    <property type="method" value="X-ray"/>
    <property type="resolution" value="3.10 A"/>
    <property type="chains" value="G=754-763"/>
</dbReference>
<dbReference type="PDB" id="7Z0L">
    <property type="method" value="EM"/>
    <property type="resolution" value="4.00 A"/>
    <property type="chains" value="A=28-319"/>
</dbReference>
<dbReference type="PDB" id="8QY4">
    <property type="method" value="EM"/>
    <property type="resolution" value="3.06 A"/>
    <property type="chains" value="C/F=1-917"/>
</dbReference>
<dbReference type="PDB" id="8QY5">
    <property type="method" value="EM"/>
    <property type="resolution" value="3.10 A"/>
    <property type="chains" value="A/D=1-917"/>
</dbReference>
<dbReference type="PDB" id="8QY6">
    <property type="method" value="EM"/>
    <property type="resolution" value="3.16 A"/>
    <property type="chains" value="A/D=1-917"/>
</dbReference>
<dbReference type="PDB" id="8V2B">
    <property type="method" value="EM"/>
    <property type="resolution" value="3.67 A"/>
    <property type="chains" value="B=23-617"/>
</dbReference>
<dbReference type="PDB" id="8V2C">
    <property type="method" value="EM"/>
    <property type="resolution" value="3.46 A"/>
    <property type="chains" value="B=23-617"/>
</dbReference>
<dbReference type="PDBsum" id="2BBU"/>
<dbReference type="PDBsum" id="2HMH"/>
<dbReference type="PDBsum" id="4GL9"/>
<dbReference type="PDBsum" id="6C5X"/>
<dbReference type="PDBsum" id="7Z0L"/>
<dbReference type="PDBsum" id="8QY4"/>
<dbReference type="PDBsum" id="8QY5"/>
<dbReference type="PDBsum" id="8QY6"/>
<dbReference type="PDBsum" id="8V2B"/>
<dbReference type="PDBsum" id="8V2C"/>
<dbReference type="EMDB" id="EMD-14427"/>
<dbReference type="EMDB" id="EMD-18741"/>
<dbReference type="EMDB" id="EMD-18742"/>
<dbReference type="EMDB" id="EMD-18743"/>
<dbReference type="EMDB" id="EMD-42904"/>
<dbReference type="EMDB" id="EMD-42905"/>
<dbReference type="SMR" id="Q00560"/>
<dbReference type="BioGRID" id="200643">
    <property type="interactions" value="14"/>
</dbReference>
<dbReference type="CORUM" id="Q00560"/>
<dbReference type="DIP" id="DIP-5782N"/>
<dbReference type="FunCoup" id="Q00560">
    <property type="interactions" value="652"/>
</dbReference>
<dbReference type="IntAct" id="Q00560">
    <property type="interactions" value="7"/>
</dbReference>
<dbReference type="STRING" id="10090.ENSMUSP00000138836"/>
<dbReference type="GlyConnect" id="2412">
    <property type="glycosylation" value="2 N-Linked glycans (1 site)"/>
</dbReference>
<dbReference type="GlyCosmos" id="Q00560">
    <property type="glycosylation" value="9 sites, 2 glycans"/>
</dbReference>
<dbReference type="GlyGen" id="Q00560">
    <property type="glycosylation" value="12 sites, 10 N-linked glycans (10 sites), 1 O-linked glycan (1 site)"/>
</dbReference>
<dbReference type="iPTMnet" id="Q00560"/>
<dbReference type="PhosphoSitePlus" id="Q00560"/>
<dbReference type="SwissPalm" id="Q00560"/>
<dbReference type="jPOST" id="Q00560"/>
<dbReference type="PaxDb" id="10090-ENSMUSP00000138836"/>
<dbReference type="ProteomicsDB" id="269398"/>
<dbReference type="Pumba" id="Q00560"/>
<dbReference type="Antibodypedia" id="2448">
    <property type="antibodies" value="831 antibodies from 40 providers"/>
</dbReference>
<dbReference type="DNASU" id="16195"/>
<dbReference type="Ensembl" id="ENSMUST00000070731.11">
    <property type="protein sequence ID" value="ENSMUSP00000064205.5"/>
    <property type="gene ID" value="ENSMUSG00000021756.13"/>
</dbReference>
<dbReference type="Ensembl" id="ENSMUST00000183663.8">
    <property type="protein sequence ID" value="ENSMUSP00000138836.2"/>
    <property type="gene ID" value="ENSMUSG00000021756.13"/>
</dbReference>
<dbReference type="Ensembl" id="ENSMUST00000184311.8">
    <property type="protein sequence ID" value="ENSMUSP00000139227.2"/>
    <property type="gene ID" value="ENSMUSG00000021756.13"/>
</dbReference>
<dbReference type="GeneID" id="16195"/>
<dbReference type="KEGG" id="mmu:16195"/>
<dbReference type="UCSC" id="uc007rwg.2">
    <property type="organism name" value="mouse"/>
</dbReference>
<dbReference type="AGR" id="MGI:96560"/>
<dbReference type="CTD" id="3572"/>
<dbReference type="MGI" id="MGI:96560">
    <property type="gene designation" value="Il6st"/>
</dbReference>
<dbReference type="VEuPathDB" id="HostDB:ENSMUSG00000021756"/>
<dbReference type="eggNOG" id="ENOG502QXEG">
    <property type="taxonomic scope" value="Eukaryota"/>
</dbReference>
<dbReference type="GeneTree" id="ENSGT00940000159608"/>
<dbReference type="InParanoid" id="Q00560"/>
<dbReference type="OMA" id="RYILEWC"/>
<dbReference type="OrthoDB" id="9934532at2759"/>
<dbReference type="PhylomeDB" id="Q00560"/>
<dbReference type="TreeFam" id="TF338122"/>
<dbReference type="Reactome" id="R-MMU-1059683">
    <property type="pathway name" value="Interleukin-6 signaling"/>
</dbReference>
<dbReference type="Reactome" id="R-MMU-110056">
    <property type="pathway name" value="MAPK3 (ERK1) activation"/>
</dbReference>
<dbReference type="Reactome" id="R-MMU-112411">
    <property type="pathway name" value="MAPK1 (ERK2) activation"/>
</dbReference>
<dbReference type="Reactome" id="R-MMU-6788467">
    <property type="pathway name" value="IL-6-type cytokine receptor ligand interactions"/>
</dbReference>
<dbReference type="Reactome" id="R-MMU-8984722">
    <property type="pathway name" value="Interleukin-35 Signalling"/>
</dbReference>
<dbReference type="Reactome" id="R-MMU-9020956">
    <property type="pathway name" value="Interleukin-27 signaling"/>
</dbReference>
<dbReference type="BioGRID-ORCS" id="16195">
    <property type="hits" value="2 hits in 80 CRISPR screens"/>
</dbReference>
<dbReference type="ChiTaRS" id="Il6st">
    <property type="organism name" value="mouse"/>
</dbReference>
<dbReference type="EvolutionaryTrace" id="Q00560"/>
<dbReference type="PRO" id="PR:Q00560"/>
<dbReference type="Proteomes" id="UP000000589">
    <property type="component" value="Chromosome 13"/>
</dbReference>
<dbReference type="RNAct" id="Q00560">
    <property type="molecule type" value="protein"/>
</dbReference>
<dbReference type="Bgee" id="ENSMUSG00000021756">
    <property type="expression patterns" value="Expressed in decidua and 261 other cell types or tissues"/>
</dbReference>
<dbReference type="ExpressionAtlas" id="Q00560">
    <property type="expression patterns" value="baseline and differential"/>
</dbReference>
<dbReference type="GO" id="GO:0044297">
    <property type="term" value="C:cell body"/>
    <property type="evidence" value="ECO:0000314"/>
    <property type="project" value="MGI"/>
</dbReference>
<dbReference type="GO" id="GO:0070110">
    <property type="term" value="C:ciliary neurotrophic factor receptor complex"/>
    <property type="evidence" value="ECO:0007669"/>
    <property type="project" value="Ensembl"/>
</dbReference>
<dbReference type="GO" id="GO:0030425">
    <property type="term" value="C:dendrite"/>
    <property type="evidence" value="ECO:0000314"/>
    <property type="project" value="MGI"/>
</dbReference>
<dbReference type="GO" id="GO:0009897">
    <property type="term" value="C:external side of plasma membrane"/>
    <property type="evidence" value="ECO:0000314"/>
    <property type="project" value="MGI"/>
</dbReference>
<dbReference type="GO" id="GO:0005896">
    <property type="term" value="C:interleukin-6 receptor complex"/>
    <property type="evidence" value="ECO:0007669"/>
    <property type="project" value="Ensembl"/>
</dbReference>
<dbReference type="GO" id="GO:0045121">
    <property type="term" value="C:membrane raft"/>
    <property type="evidence" value="ECO:0007669"/>
    <property type="project" value="Ensembl"/>
</dbReference>
<dbReference type="GO" id="GO:0043025">
    <property type="term" value="C:neuronal cell body"/>
    <property type="evidence" value="ECO:0000314"/>
    <property type="project" value="MGI"/>
</dbReference>
<dbReference type="GO" id="GO:0005900">
    <property type="term" value="C:oncostatin-M receptor complex"/>
    <property type="evidence" value="ECO:0007669"/>
    <property type="project" value="Ensembl"/>
</dbReference>
<dbReference type="GO" id="GO:0005127">
    <property type="term" value="F:ciliary neurotrophic factor receptor binding"/>
    <property type="evidence" value="ECO:0007669"/>
    <property type="project" value="Ensembl"/>
</dbReference>
<dbReference type="GO" id="GO:0015026">
    <property type="term" value="F:coreceptor activity"/>
    <property type="evidence" value="ECO:0007669"/>
    <property type="project" value="Ensembl"/>
</dbReference>
<dbReference type="GO" id="GO:0042802">
    <property type="term" value="F:identical protein binding"/>
    <property type="evidence" value="ECO:0007669"/>
    <property type="project" value="Ensembl"/>
</dbReference>
<dbReference type="GO" id="GO:0045509">
    <property type="term" value="F:interleukin-27 receptor activity"/>
    <property type="evidence" value="ECO:0007669"/>
    <property type="project" value="Ensembl"/>
</dbReference>
<dbReference type="GO" id="GO:0019981">
    <property type="term" value="F:interleukin-6 binding"/>
    <property type="evidence" value="ECO:0007669"/>
    <property type="project" value="Ensembl"/>
</dbReference>
<dbReference type="GO" id="GO:0004915">
    <property type="term" value="F:interleukin-6 receptor activity"/>
    <property type="evidence" value="ECO:0007669"/>
    <property type="project" value="Ensembl"/>
</dbReference>
<dbReference type="GO" id="GO:0005138">
    <property type="term" value="F:interleukin-6 receptor binding"/>
    <property type="evidence" value="ECO:0007669"/>
    <property type="project" value="Ensembl"/>
</dbReference>
<dbReference type="GO" id="GO:0004923">
    <property type="term" value="F:leukemia inhibitory factor receptor activity"/>
    <property type="evidence" value="ECO:0007669"/>
    <property type="project" value="Ensembl"/>
</dbReference>
<dbReference type="GO" id="GO:0004924">
    <property type="term" value="F:oncostatin-M receptor activity"/>
    <property type="evidence" value="ECO:0007669"/>
    <property type="project" value="Ensembl"/>
</dbReference>
<dbReference type="GO" id="GO:0030296">
    <property type="term" value="F:protein tyrosine kinase activator activity"/>
    <property type="evidence" value="ECO:0007669"/>
    <property type="project" value="Ensembl"/>
</dbReference>
<dbReference type="GO" id="GO:0097110">
    <property type="term" value="F:scaffold protein binding"/>
    <property type="evidence" value="ECO:0007669"/>
    <property type="project" value="Ensembl"/>
</dbReference>
<dbReference type="GO" id="GO:0097696">
    <property type="term" value="P:cell surface receptor signaling pathway via STAT"/>
    <property type="evidence" value="ECO:0007669"/>
    <property type="project" value="Ensembl"/>
</dbReference>
<dbReference type="GO" id="GO:0019221">
    <property type="term" value="P:cytokine-mediated signaling pathway"/>
    <property type="evidence" value="ECO:0000314"/>
    <property type="project" value="MGI"/>
</dbReference>
<dbReference type="GO" id="GO:0005977">
    <property type="term" value="P:glycogen metabolic process"/>
    <property type="evidence" value="ECO:0000315"/>
    <property type="project" value="MGI"/>
</dbReference>
<dbReference type="GO" id="GO:0038154">
    <property type="term" value="P:interleukin-11-mediated signaling pathway"/>
    <property type="evidence" value="ECO:0007669"/>
    <property type="project" value="Ensembl"/>
</dbReference>
<dbReference type="GO" id="GO:0070102">
    <property type="term" value="P:interleukin-6-mediated signaling pathway"/>
    <property type="evidence" value="ECO:0000314"/>
    <property type="project" value="UniProtKB"/>
</dbReference>
<dbReference type="GO" id="GO:0060576">
    <property type="term" value="P:intestinal epithelial cell development"/>
    <property type="evidence" value="ECO:0000314"/>
    <property type="project" value="UniProtKB"/>
</dbReference>
<dbReference type="GO" id="GO:0043524">
    <property type="term" value="P:negative regulation of neuron apoptotic process"/>
    <property type="evidence" value="ECO:0007669"/>
    <property type="project" value="Ensembl"/>
</dbReference>
<dbReference type="GO" id="GO:0002821">
    <property type="term" value="P:positive regulation of adaptive immune response"/>
    <property type="evidence" value="ECO:0007669"/>
    <property type="project" value="Ensembl"/>
</dbReference>
<dbReference type="GO" id="GO:0048711">
    <property type="term" value="P:positive regulation of astrocyte differentiation"/>
    <property type="evidence" value="ECO:0000315"/>
    <property type="project" value="MGI"/>
</dbReference>
<dbReference type="GO" id="GO:0008284">
    <property type="term" value="P:positive regulation of cell population proliferation"/>
    <property type="evidence" value="ECO:0000316"/>
    <property type="project" value="MGI"/>
</dbReference>
<dbReference type="GO" id="GO:0045747">
    <property type="term" value="P:positive regulation of Notch signaling pathway"/>
    <property type="evidence" value="ECO:0000314"/>
    <property type="project" value="UniProtKB"/>
</dbReference>
<dbReference type="GO" id="GO:0045669">
    <property type="term" value="P:positive regulation of osteoblast differentiation"/>
    <property type="evidence" value="ECO:0007669"/>
    <property type="project" value="Ensembl"/>
</dbReference>
<dbReference type="GO" id="GO:0042102">
    <property type="term" value="P:positive regulation of T cell proliferation"/>
    <property type="evidence" value="ECO:0007669"/>
    <property type="project" value="Ensembl"/>
</dbReference>
<dbReference type="GO" id="GO:0008593">
    <property type="term" value="P:regulation of Notch signaling pathway"/>
    <property type="evidence" value="ECO:0000314"/>
    <property type="project" value="MGI"/>
</dbReference>
<dbReference type="GO" id="GO:0007165">
    <property type="term" value="P:signal transduction"/>
    <property type="evidence" value="ECO:0000314"/>
    <property type="project" value="MGI"/>
</dbReference>
<dbReference type="CDD" id="cd00063">
    <property type="entry name" value="FN3"/>
    <property type="match status" value="3"/>
</dbReference>
<dbReference type="FunFam" id="2.60.40.10:FF:000281">
    <property type="entry name" value="Cytokine receptor like factor 1"/>
    <property type="match status" value="1"/>
</dbReference>
<dbReference type="FunFam" id="2.60.40.10:FF:000414">
    <property type="entry name" value="Interleukin-6 receptor subunit beta"/>
    <property type="match status" value="1"/>
</dbReference>
<dbReference type="FunFam" id="2.60.40.10:FF:000524">
    <property type="entry name" value="Interleukin-6 receptor subunit beta"/>
    <property type="match status" value="1"/>
</dbReference>
<dbReference type="FunFam" id="2.60.40.10:FF:000542">
    <property type="entry name" value="Interleukin-6 receptor subunit beta"/>
    <property type="match status" value="1"/>
</dbReference>
<dbReference type="FunFam" id="2.60.40.10:FF:000855">
    <property type="entry name" value="Interleukin-6 receptor subunit beta"/>
    <property type="match status" value="1"/>
</dbReference>
<dbReference type="FunFam" id="2.60.40.10:FF:000563">
    <property type="entry name" value="interleukin-6 receptor subunit beta"/>
    <property type="match status" value="1"/>
</dbReference>
<dbReference type="Gene3D" id="2.60.40.10">
    <property type="entry name" value="Immunoglobulins"/>
    <property type="match status" value="6"/>
</dbReference>
<dbReference type="IDEAL" id="IID50222"/>
<dbReference type="InterPro" id="IPR003961">
    <property type="entry name" value="FN3_dom"/>
</dbReference>
<dbReference type="InterPro" id="IPR036116">
    <property type="entry name" value="FN3_sf"/>
</dbReference>
<dbReference type="InterPro" id="IPR003529">
    <property type="entry name" value="Hematopoietin_rcpt_Gp130_CS"/>
</dbReference>
<dbReference type="InterPro" id="IPR013783">
    <property type="entry name" value="Ig-like_fold"/>
</dbReference>
<dbReference type="InterPro" id="IPR010457">
    <property type="entry name" value="IgC2-like_lig-bd"/>
</dbReference>
<dbReference type="InterPro" id="IPR050379">
    <property type="entry name" value="Type-I_Cytokine_Rcpt"/>
</dbReference>
<dbReference type="InterPro" id="IPR015321">
    <property type="entry name" value="TypeI_recpt_CBD"/>
</dbReference>
<dbReference type="PANTHER" id="PTHR23036">
    <property type="entry name" value="CYTOKINE RECEPTOR"/>
    <property type="match status" value="1"/>
</dbReference>
<dbReference type="PANTHER" id="PTHR23036:SF16">
    <property type="entry name" value="CYTOKINE RECEPTOR-LIKE FACTOR 1"/>
    <property type="match status" value="1"/>
</dbReference>
<dbReference type="Pfam" id="PF00041">
    <property type="entry name" value="fn3"/>
    <property type="match status" value="2"/>
</dbReference>
<dbReference type="Pfam" id="PF09240">
    <property type="entry name" value="IL6Ra-bind"/>
    <property type="match status" value="1"/>
</dbReference>
<dbReference type="Pfam" id="PF06328">
    <property type="entry name" value="Lep_receptor_Ig"/>
    <property type="match status" value="1"/>
</dbReference>
<dbReference type="SMART" id="SM00060">
    <property type="entry name" value="FN3"/>
    <property type="match status" value="5"/>
</dbReference>
<dbReference type="SUPFAM" id="SSF49265">
    <property type="entry name" value="Fibronectin type III"/>
    <property type="match status" value="4"/>
</dbReference>
<dbReference type="PROSITE" id="PS50853">
    <property type="entry name" value="FN3"/>
    <property type="match status" value="5"/>
</dbReference>
<dbReference type="PROSITE" id="PS01353">
    <property type="entry name" value="HEMATOPO_REC_L_F2"/>
    <property type="match status" value="1"/>
</dbReference>
<sequence>MSAPRIWLAQALLFFLTTESIGQLLEPCGYIYPEFPVVQRGSNFTAICVLKEACLQHYYVNASYIVWKTNHAAVPREQVTVINRTTSSVTFTDVVLPSVQLTCNILSFGQIEQNVYGVTMLSGFPPDKPTNLTCIVNEGKNMLCQWDPGRETYLETNYTLKSEWATEKFPDCQSKHGTSCMVSYMPTYYVNIEVWVEAENALGKVSSESINFDPVDKVKPTPPYNLSVTNSEELSSILKLSWVSSGLGGLLDLKSDIQYRTKDASTWIQVPLEDTMSPRTSFTVQDLKPFTEYVFRIRSIKDSGKGYWSDWSEEASGTTYEDRPSRPPSFWYKTNPSHGQEYRSVRLIWKALPLSEANGKILDYEVILTQSKSVSQTYTVTGTELTVNLTNDRYVASLAARNKVGKSAAAVLTIPSPHVTAAYSVVNLKAFPKDNLLWVEWTPPPKPVSKYILEWCVLSENAPCVEDWQQEDATVNRTHLRGRLLESKCYQITVTPVFATGPGGSESLKAYLKQAAPARGPTVRTKKVGKNEAVLAWDQIPVDDQNGFIRNYSISYRTSVGKEMVVHVDSSHTEYTLSSLSSDTLYMVRMAAYTDEGGKDGPEFTFTTPKFAQGEIEAIVVPVCLAFLLTTLLGVLFCFNKRDLIKKHIWPNVPDPSKSHIAQWSPHTPPRHNFNSKDQMYSDGNFTDVSVVEIEANNKKPCPDDLKSVDLFKKEKVSTEGHSSGIGGSSCMSSSRPSISSNEENESAQSTASTVQYSTVVHSGYRHQVPSVQVFSRSESTQPLLDSEERPEDLQLVDSVDGGDEILPRQPYFKQNCSQPEACPEISHFERSNQVLSGNEEDFVRLKQQQVSDHISQPYGSEQRRLFQEGSTADALGTGADGQMERFESVGMETTIDEEIPKSYLPQTVRQGGYMPQ</sequence>
<keyword id="KW-0002">3D-structure</keyword>
<keyword id="KW-1003">Cell membrane</keyword>
<keyword id="KW-1015">Disulfide bond</keyword>
<keyword id="KW-0325">Glycoprotein</keyword>
<keyword id="KW-0393">Immunoglobulin domain</keyword>
<keyword id="KW-0472">Membrane</keyword>
<keyword id="KW-0597">Phosphoprotein</keyword>
<keyword id="KW-0675">Receptor</keyword>
<keyword id="KW-1185">Reference proteome</keyword>
<keyword id="KW-0677">Repeat</keyword>
<keyword id="KW-0732">Signal</keyword>
<keyword id="KW-0812">Transmembrane</keyword>
<keyword id="KW-1133">Transmembrane helix</keyword>
<comment type="function">
    <text evidence="1 5 6 7 10 11 12 13 14 16 17 18">Signal-transducing molecule (PubMed:1602143). The receptor systems for IL6, LIF, OSM, CNTF, IL11, CTF1 and BSF3 can utilize IL6ST for initiating signal transmission. Binding of IL6 to IL6R induces IL6ST homodimerization and formation of a high-affinity receptor complex, which activates the intracellular JAK-MAPK and JAK-STAT3 signaling pathways (PubMed:10661409, PubMed:1602143). That causes phosphorylation of IL6ST tyrosine residues which in turn activates STAT3 (PubMed:10661409). In parallel, the IL6 signaling pathway induces the expression of two cytokine receptor signaling inhibitors, SOCS1 and SOCS3, which inhibit JAK and terminate the activity of the IL6 signaling pathway as a negative feedback loop (PubMed:9202125). Also activates the yes-associated protein 1 (YAP) and NOTCH pathways to control inflammation-induced epithelial regeneration, independently of STAT3 (PubMed:25731159). Mediates signals which regulate immune response, hematopoiesis, pain control and bone metabolism (PubMed:10661409, PubMed:25057188, PubMed:26255596, PubMed:8552649). Has a role in embryonic development (PubMed:10661409). Essential for survival of motor and sensory neurons and for differentiation of astrocytes (PubMed:10377352). Required for expression of TRPA1 in nociceptive neurons (PubMed:25057188). Required for the maintenance of PTH1R expression in the osteoblast lineage and for the stimulation of PTH-induced osteoblast differentiation (PubMed:25228504). Required for normal trabecular bone mass and cortical bone composition (PubMed:24339143, PubMed:26255596, PubMed:9348227).</text>
</comment>
<comment type="subunit">
    <text evidence="1 8 19">Component of a hexamer of two molecules each of IL6, IL6R and IL6ST; associates with the complex IL6:IL6R but does not interact with IL6 (By similarity). Forms heterodimers composed of LIFR and IL6ST (type I OSM receptor) which are activated by LIF and OSM. Also forms heterodimers composed of OSMR and IL6ST (type II receptor) which are activated by OSM but not by LIF. Interacts with HCK (By similarity). Interacts with INPP5D/SHIP1 (PubMed:17105399). Interacts with SRC and YES (By similarity). Interacts with ARMH4; this interaction prevents IL6ST protein homodimerization and bridges ARMH4 with IL6R and STAT3 and therefore inhibits phosphorylation of STAT3 at 'Tyr-705' (By similarity).</text>
</comment>
<comment type="interaction">
    <interactant intactId="EBI-3862992">
        <id>Q00560</id>
    </interactant>
    <interactant intactId="EBI-2659360">
        <id>O35718</id>
        <label>Socs3</label>
    </interactant>
    <organismsDiffer>false</organismsDiffer>
    <experiments>6</experiments>
</comment>
<comment type="subcellular location">
    <subcellularLocation>
        <location evidence="1">Cell membrane</location>
        <topology evidence="2">Single-pass type I membrane protein</topology>
    </subcellularLocation>
</comment>
<comment type="tissue specificity">
    <text evidence="7 15">Expression not restricted to IL6-responsive cells. Found in tissues such as brain, heart, thymus, spleen, kidney, lung and liver. Found in all the cell lines tested except BaF-B03. Expressed paraventricular nucleus of the hypothalamus (PubMed:28402851).</text>
</comment>
<comment type="developmental stage">
    <text evidence="7">In embryonic stem cells it is found from day 6 of gestation. It reaches a peak on day 8 and gradually declines during the rest of embryogenesis.</text>
</comment>
<comment type="induction">
    <text evidence="15">In paraventricular nucleus of the hypothalamus, expression is enhanced by obesity.</text>
</comment>
<comment type="domain">
    <text>The WSXWS motif appears to be necessary for proper protein folding and thereby efficient intracellular transport and cell-surface receptor binding.</text>
</comment>
<comment type="domain">
    <text>The box 1 motif is required for JAK interaction and/or activation.</text>
</comment>
<comment type="PTM">
    <text evidence="1">Phosphorylation of Ser-780 down-regulates cell surface expression.</text>
</comment>
<comment type="PTM">
    <text evidence="1">Heavily N-glycosylated. Glycosylation is required for protein stability and localization in plasma membrane but not for ligand binding.</text>
</comment>
<comment type="disruption phenotype">
    <text evidence="5 10 11 14 16 18">Progressively lethal between 12.5 dpc and birth (PubMed:8552649). Embryos show hypoplastic ventricular myocardium without septal and trabecular defect, reduced numbers of pluripotential and committed hematopoietic progenitors in liver and reduced differentiated lineages in thymus (PubMed:8552649). Impaired differentiation of astrocytes and decreased number of dorsal root ganglion and motor neurons at 18.5 dpc (PubMed:10377352). Decreased volume of mineralized trabecular bones, while number of osteoclasts is increased (PubMed:26255596, PubMed:9348227). Conditional knockout from the entire osteoblast lineage or specifically in osteocytes causes no significant skeletal or morphological defects but mice show 30% lower trabecular bone formation rate and larger cortical diameter compared to wild type (PubMed:24339143, PubMed:26255596). Conditional knockout in primary nociceptive afferents causes reduced sensitivity to mechanical stimulation due to reduced sensitivity of nociceptive neurons and reduces TRPA1 mRNA expression in dorsal root ganglion neurons (PubMed:25057188).</text>
</comment>
<comment type="similarity">
    <text evidence="21">Belongs to the type I cytokine receptor family. Type 2 subfamily.</text>
</comment>
<evidence type="ECO:0000250" key="1">
    <source>
        <dbReference type="UniProtKB" id="P40189"/>
    </source>
</evidence>
<evidence type="ECO:0000255" key="2"/>
<evidence type="ECO:0000255" key="3">
    <source>
        <dbReference type="PROSITE-ProRule" id="PRU00316"/>
    </source>
</evidence>
<evidence type="ECO:0000256" key="4">
    <source>
        <dbReference type="SAM" id="MobiDB-lite"/>
    </source>
</evidence>
<evidence type="ECO:0000269" key="5">
    <source>
    </source>
</evidence>
<evidence type="ECO:0000269" key="6">
    <source>
    </source>
</evidence>
<evidence type="ECO:0000269" key="7">
    <source>
    </source>
</evidence>
<evidence type="ECO:0000269" key="8">
    <source>
    </source>
</evidence>
<evidence type="ECO:0000269" key="9">
    <source>
    </source>
</evidence>
<evidence type="ECO:0000269" key="10">
    <source>
    </source>
</evidence>
<evidence type="ECO:0000269" key="11">
    <source>
    </source>
</evidence>
<evidence type="ECO:0000269" key="12">
    <source>
    </source>
</evidence>
<evidence type="ECO:0000269" key="13">
    <source>
    </source>
</evidence>
<evidence type="ECO:0000269" key="14">
    <source>
    </source>
</evidence>
<evidence type="ECO:0000269" key="15">
    <source>
    </source>
</evidence>
<evidence type="ECO:0000269" key="16">
    <source>
    </source>
</evidence>
<evidence type="ECO:0000269" key="17">
    <source>
    </source>
</evidence>
<evidence type="ECO:0000269" key="18">
    <source>
    </source>
</evidence>
<evidence type="ECO:0000269" key="19">
    <source>
    </source>
</evidence>
<evidence type="ECO:0000303" key="20">
    <source>
    </source>
</evidence>
<evidence type="ECO:0000305" key="21"/>
<evidence type="ECO:0000312" key="22">
    <source>
        <dbReference type="MGI" id="MGI:96560"/>
    </source>
</evidence>
<evidence type="ECO:0007744" key="23">
    <source>
    </source>
</evidence>
<evidence type="ECO:0007829" key="24">
    <source>
        <dbReference type="PDB" id="8QY4"/>
    </source>
</evidence>
<evidence type="ECO:0007829" key="25">
    <source>
        <dbReference type="PDB" id="8QY5"/>
    </source>
</evidence>
<evidence type="ECO:0007829" key="26">
    <source>
        <dbReference type="PDB" id="8V2C"/>
    </source>
</evidence>
<feature type="signal peptide" evidence="2">
    <location>
        <begin position="1"/>
        <end position="22"/>
    </location>
</feature>
<feature type="chain" id="PRO_0000010900" description="Interleukin-6 receptor subunit beta">
    <location>
        <begin position="23"/>
        <end position="917"/>
    </location>
</feature>
<feature type="topological domain" description="Extracellular" evidence="2">
    <location>
        <begin position="23"/>
        <end position="617"/>
    </location>
</feature>
<feature type="transmembrane region" description="Helical" evidence="2">
    <location>
        <begin position="618"/>
        <end position="639"/>
    </location>
</feature>
<feature type="topological domain" description="Cytoplasmic" evidence="2">
    <location>
        <begin position="640"/>
        <end position="917"/>
    </location>
</feature>
<feature type="domain" description="Ig-like C2-type">
    <location>
        <begin position="26"/>
        <end position="120"/>
    </location>
</feature>
<feature type="domain" description="Fibronectin type-III 1" evidence="3">
    <location>
        <begin position="128"/>
        <end position="221"/>
    </location>
</feature>
<feature type="domain" description="Fibronectin type-III 2" evidence="3">
    <location>
        <begin position="222"/>
        <end position="322"/>
    </location>
</feature>
<feature type="domain" description="Fibronectin type-III 3" evidence="3">
    <location>
        <begin position="327"/>
        <end position="417"/>
    </location>
</feature>
<feature type="domain" description="Fibronectin type-III 4" evidence="3">
    <location>
        <begin position="422"/>
        <end position="515"/>
    </location>
</feature>
<feature type="domain" description="Fibronectin type-III 5" evidence="3">
    <location>
        <begin position="517"/>
        <end position="611"/>
    </location>
</feature>
<feature type="region of interest" description="Disordered" evidence="4">
    <location>
        <begin position="658"/>
        <end position="678"/>
    </location>
</feature>
<feature type="region of interest" description="Disordered" evidence="4">
    <location>
        <begin position="719"/>
        <end position="754"/>
    </location>
</feature>
<feature type="region of interest" description="Disordered" evidence="4">
    <location>
        <begin position="898"/>
        <end position="917"/>
    </location>
</feature>
<feature type="short sequence motif" description="WSXWS motif">
    <location>
        <begin position="308"/>
        <end position="312"/>
    </location>
</feature>
<feature type="short sequence motif" description="Box 1 motif">
    <location>
        <begin position="649"/>
        <end position="657"/>
    </location>
</feature>
<feature type="compositionally biased region" description="Low complexity" evidence="4">
    <location>
        <begin position="729"/>
        <end position="753"/>
    </location>
</feature>
<feature type="modified residue" description="Phosphoserine" evidence="1">
    <location>
        <position position="659"/>
    </location>
</feature>
<feature type="modified residue" description="Phosphoserine" evidence="1">
    <location>
        <position position="665"/>
    </location>
</feature>
<feature type="modified residue" description="Phosphoserine" evidence="1">
    <location>
        <position position="780"/>
    </location>
</feature>
<feature type="modified residue" description="Phosphoserine" evidence="23">
    <location>
        <position position="787"/>
    </location>
</feature>
<feature type="modified residue" description="Phosphoserine" evidence="1">
    <location>
        <position position="827"/>
    </location>
</feature>
<feature type="modified residue" description="Phosphoserine" evidence="1">
    <location>
        <position position="837"/>
    </location>
</feature>
<feature type="glycosylation site" description="N-linked (GlcNAc...) asparagine" evidence="2">
    <location>
        <position position="43"/>
    </location>
</feature>
<feature type="glycosylation site" description="N-linked (GlcNAc...) asparagine" evidence="2">
    <location>
        <position position="61"/>
    </location>
</feature>
<feature type="glycosylation site" description="N-linked (GlcNAc...) asparagine" evidence="2">
    <location>
        <position position="83"/>
    </location>
</feature>
<feature type="glycosylation site" description="N-linked (GlcNAc...) asparagine" evidence="2">
    <location>
        <position position="131"/>
    </location>
</feature>
<feature type="glycosylation site" description="N-linked (GlcNAc...) asparagine" evidence="2">
    <location>
        <position position="157"/>
    </location>
</feature>
<feature type="glycosylation site" description="N-linked (GlcNAc...) asparagine" evidence="9">
    <location>
        <position position="225"/>
    </location>
</feature>
<feature type="glycosylation site" description="N-linked (GlcNAc...) asparagine" evidence="2">
    <location>
        <position position="388"/>
    </location>
</feature>
<feature type="glycosylation site" description="N-linked (GlcNAc...) asparagine" evidence="2">
    <location>
        <position position="476"/>
    </location>
</feature>
<feature type="glycosylation site" description="N-linked (GlcNAc...) asparagine" evidence="2">
    <location>
        <position position="551"/>
    </location>
</feature>
<feature type="disulfide bond" evidence="1">
    <location>
        <begin position="28"/>
        <end position="54"/>
    </location>
</feature>
<feature type="disulfide bond" evidence="1">
    <location>
        <begin position="48"/>
        <end position="103"/>
    </location>
</feature>
<feature type="disulfide bond" evidence="1">
    <location>
        <begin position="134"/>
        <end position="144"/>
    </location>
</feature>
<feature type="disulfide bond" evidence="1">
    <location>
        <begin position="172"/>
        <end position="180"/>
    </location>
</feature>
<feature type="disulfide bond" evidence="1">
    <location>
        <begin position="456"/>
        <end position="464"/>
    </location>
</feature>
<feature type="sequence conflict" description="In Ref. 1; CAA44515/AAA37723." evidence="21" ref="1">
    <original>Q</original>
    <variation>E</variation>
    <location>
        <position position="756"/>
    </location>
</feature>
<feature type="strand" evidence="24">
    <location>
        <begin position="28"/>
        <end position="35"/>
    </location>
</feature>
<feature type="strand" evidence="24">
    <location>
        <begin position="37"/>
        <end position="39"/>
    </location>
</feature>
<feature type="strand" evidence="24">
    <location>
        <begin position="44"/>
        <end position="50"/>
    </location>
</feature>
<feature type="helix" evidence="24">
    <location>
        <begin position="52"/>
        <end position="58"/>
    </location>
</feature>
<feature type="helix" evidence="24">
    <location>
        <begin position="62"/>
        <end position="64"/>
    </location>
</feature>
<feature type="strand" evidence="24">
    <location>
        <begin position="65"/>
        <end position="69"/>
    </location>
</feature>
<feature type="turn" evidence="25">
    <location>
        <begin position="76"/>
        <end position="78"/>
    </location>
</feature>
<feature type="strand" evidence="24">
    <location>
        <begin position="79"/>
        <end position="83"/>
    </location>
</feature>
<feature type="strand" evidence="24">
    <location>
        <begin position="86"/>
        <end position="93"/>
    </location>
</feature>
<feature type="strand" evidence="24">
    <location>
        <begin position="97"/>
        <end position="107"/>
    </location>
</feature>
<feature type="turn" evidence="24">
    <location>
        <begin position="108"/>
        <end position="110"/>
    </location>
</feature>
<feature type="strand" evidence="24">
    <location>
        <begin position="111"/>
        <end position="123"/>
    </location>
</feature>
<feature type="strand" evidence="24">
    <location>
        <begin position="130"/>
        <end position="137"/>
    </location>
</feature>
<feature type="strand" evidence="24">
    <location>
        <begin position="143"/>
        <end position="147"/>
    </location>
</feature>
<feature type="strand" evidence="24">
    <location>
        <begin position="159"/>
        <end position="164"/>
    </location>
</feature>
<feature type="strand" evidence="25">
    <location>
        <begin position="165"/>
        <end position="168"/>
    </location>
</feature>
<feature type="strand" evidence="24">
    <location>
        <begin position="175"/>
        <end position="181"/>
    </location>
</feature>
<feature type="strand" evidence="26">
    <location>
        <begin position="188"/>
        <end position="190"/>
    </location>
</feature>
<feature type="strand" evidence="24">
    <location>
        <begin position="192"/>
        <end position="200"/>
    </location>
</feature>
<feature type="strand" evidence="24">
    <location>
        <begin position="203"/>
        <end position="206"/>
    </location>
</feature>
<feature type="strand" evidence="24">
    <location>
        <begin position="210"/>
        <end position="212"/>
    </location>
</feature>
<feature type="helix" evidence="24">
    <location>
        <begin position="214"/>
        <end position="217"/>
    </location>
</feature>
<feature type="strand" evidence="24">
    <location>
        <begin position="224"/>
        <end position="230"/>
    </location>
</feature>
<feature type="strand" evidence="24">
    <location>
        <begin position="238"/>
        <end position="243"/>
    </location>
</feature>
<feature type="helix" evidence="24">
    <location>
        <begin position="246"/>
        <end position="249"/>
    </location>
</feature>
<feature type="strand" evidence="24">
    <location>
        <begin position="253"/>
        <end position="263"/>
    </location>
</feature>
<feature type="helix" evidence="24">
    <location>
        <begin position="272"/>
        <end position="275"/>
    </location>
</feature>
<feature type="strand" evidence="24">
    <location>
        <begin position="280"/>
        <end position="284"/>
    </location>
</feature>
<feature type="strand" evidence="24">
    <location>
        <begin position="292"/>
        <end position="301"/>
    </location>
</feature>
<feature type="strand" evidence="24">
    <location>
        <begin position="315"/>
        <end position="318"/>
    </location>
</feature>
<feature type="strand" evidence="24">
    <location>
        <begin position="329"/>
        <end position="334"/>
    </location>
</feature>
<feature type="strand" evidence="24">
    <location>
        <begin position="341"/>
        <end position="350"/>
    </location>
</feature>
<feature type="helix" evidence="24">
    <location>
        <begin position="354"/>
        <end position="357"/>
    </location>
</feature>
<feature type="strand" evidence="24">
    <location>
        <begin position="361"/>
        <end position="369"/>
    </location>
</feature>
<feature type="strand" evidence="24">
    <location>
        <begin position="375"/>
        <end position="392"/>
    </location>
</feature>
<feature type="strand" evidence="24">
    <location>
        <begin position="394"/>
        <end position="404"/>
    </location>
</feature>
<feature type="strand" evidence="24">
    <location>
        <begin position="410"/>
        <end position="414"/>
    </location>
</feature>
<feature type="strand" evidence="24">
    <location>
        <begin position="426"/>
        <end position="433"/>
    </location>
</feature>
<feature type="strand" evidence="24">
    <location>
        <begin position="436"/>
        <end position="442"/>
    </location>
</feature>
<feature type="strand" evidence="24">
    <location>
        <begin position="449"/>
        <end position="457"/>
    </location>
</feature>
<feature type="strand" evidence="24">
    <location>
        <begin position="460"/>
        <end position="462"/>
    </location>
</feature>
<feature type="strand" evidence="24">
    <location>
        <begin position="466"/>
        <end position="472"/>
    </location>
</feature>
<feature type="strand" evidence="24">
    <location>
        <begin position="476"/>
        <end position="479"/>
    </location>
</feature>
<feature type="strand" evidence="24">
    <location>
        <begin position="489"/>
        <end position="498"/>
    </location>
</feature>
<feature type="strand" evidence="24">
    <location>
        <begin position="506"/>
        <end position="513"/>
    </location>
</feature>
<feature type="strand" evidence="24">
    <location>
        <begin position="522"/>
        <end position="528"/>
    </location>
</feature>
<feature type="strand" evidence="24">
    <location>
        <begin position="533"/>
        <end position="538"/>
    </location>
</feature>
<feature type="turn" evidence="24">
    <location>
        <begin position="542"/>
        <end position="544"/>
    </location>
</feature>
<feature type="strand" evidence="24">
    <location>
        <begin position="551"/>
        <end position="561"/>
    </location>
</feature>
<feature type="strand" evidence="24">
    <location>
        <begin position="564"/>
        <end position="569"/>
    </location>
</feature>
<feature type="strand" evidence="24">
    <location>
        <begin position="574"/>
        <end position="577"/>
    </location>
</feature>
<feature type="strand" evidence="24">
    <location>
        <begin position="586"/>
        <end position="594"/>
    </location>
</feature>
<feature type="strand" evidence="24">
    <location>
        <begin position="597"/>
        <end position="600"/>
    </location>
</feature>
<feature type="strand" evidence="24">
    <location>
        <begin position="604"/>
        <end position="606"/>
    </location>
</feature>